<feature type="chain" id="PRO_0000243336" description="Dephospho-CoA kinase">
    <location>
        <begin position="1"/>
        <end position="199"/>
    </location>
</feature>
<feature type="domain" description="DPCK" evidence="1">
    <location>
        <begin position="3"/>
        <end position="199"/>
    </location>
</feature>
<feature type="binding site" evidence="1">
    <location>
        <begin position="11"/>
        <end position="16"/>
    </location>
    <ligand>
        <name>ATP</name>
        <dbReference type="ChEBI" id="CHEBI:30616"/>
    </ligand>
</feature>
<gene>
    <name evidence="1" type="primary">coaE</name>
    <name type="ordered locus">SRU_2791</name>
</gene>
<accession>Q2RYU8</accession>
<dbReference type="EC" id="2.7.1.24" evidence="1"/>
<dbReference type="EMBL" id="CP000159">
    <property type="protein sequence ID" value="ABC45265.1"/>
    <property type="molecule type" value="Genomic_DNA"/>
</dbReference>
<dbReference type="RefSeq" id="WP_011405495.1">
    <property type="nucleotide sequence ID" value="NC_007677.1"/>
</dbReference>
<dbReference type="RefSeq" id="YP_446883.1">
    <property type="nucleotide sequence ID" value="NC_007677.1"/>
</dbReference>
<dbReference type="SMR" id="Q2RYU8"/>
<dbReference type="STRING" id="309807.SRU_2791"/>
<dbReference type="EnsemblBacteria" id="ABC45265">
    <property type="protein sequence ID" value="ABC45265"/>
    <property type="gene ID" value="SRU_2791"/>
</dbReference>
<dbReference type="KEGG" id="sru:SRU_2791"/>
<dbReference type="PATRIC" id="fig|309807.25.peg.2912"/>
<dbReference type="eggNOG" id="COG0237">
    <property type="taxonomic scope" value="Bacteria"/>
</dbReference>
<dbReference type="HOGENOM" id="CLU_057180_3_1_10"/>
<dbReference type="OrthoDB" id="9812943at2"/>
<dbReference type="UniPathway" id="UPA00241">
    <property type="reaction ID" value="UER00356"/>
</dbReference>
<dbReference type="Proteomes" id="UP000008674">
    <property type="component" value="Chromosome"/>
</dbReference>
<dbReference type="GO" id="GO:0005737">
    <property type="term" value="C:cytoplasm"/>
    <property type="evidence" value="ECO:0007669"/>
    <property type="project" value="UniProtKB-SubCell"/>
</dbReference>
<dbReference type="GO" id="GO:0005524">
    <property type="term" value="F:ATP binding"/>
    <property type="evidence" value="ECO:0007669"/>
    <property type="project" value="UniProtKB-UniRule"/>
</dbReference>
<dbReference type="GO" id="GO:0004140">
    <property type="term" value="F:dephospho-CoA kinase activity"/>
    <property type="evidence" value="ECO:0007669"/>
    <property type="project" value="UniProtKB-UniRule"/>
</dbReference>
<dbReference type="GO" id="GO:0015937">
    <property type="term" value="P:coenzyme A biosynthetic process"/>
    <property type="evidence" value="ECO:0007669"/>
    <property type="project" value="UniProtKB-UniRule"/>
</dbReference>
<dbReference type="CDD" id="cd02022">
    <property type="entry name" value="DPCK"/>
    <property type="match status" value="1"/>
</dbReference>
<dbReference type="Gene3D" id="3.40.50.300">
    <property type="entry name" value="P-loop containing nucleotide triphosphate hydrolases"/>
    <property type="match status" value="1"/>
</dbReference>
<dbReference type="HAMAP" id="MF_00376">
    <property type="entry name" value="Dephospho_CoA_kinase"/>
    <property type="match status" value="1"/>
</dbReference>
<dbReference type="InterPro" id="IPR001977">
    <property type="entry name" value="Depp_CoAkinase"/>
</dbReference>
<dbReference type="InterPro" id="IPR027417">
    <property type="entry name" value="P-loop_NTPase"/>
</dbReference>
<dbReference type="NCBIfam" id="TIGR00152">
    <property type="entry name" value="dephospho-CoA kinase"/>
    <property type="match status" value="1"/>
</dbReference>
<dbReference type="PANTHER" id="PTHR10695:SF46">
    <property type="entry name" value="BIFUNCTIONAL COENZYME A SYNTHASE-RELATED"/>
    <property type="match status" value="1"/>
</dbReference>
<dbReference type="PANTHER" id="PTHR10695">
    <property type="entry name" value="DEPHOSPHO-COA KINASE-RELATED"/>
    <property type="match status" value="1"/>
</dbReference>
<dbReference type="Pfam" id="PF01121">
    <property type="entry name" value="CoaE"/>
    <property type="match status" value="1"/>
</dbReference>
<dbReference type="SUPFAM" id="SSF52540">
    <property type="entry name" value="P-loop containing nucleoside triphosphate hydrolases"/>
    <property type="match status" value="1"/>
</dbReference>
<dbReference type="PROSITE" id="PS51219">
    <property type="entry name" value="DPCK"/>
    <property type="match status" value="1"/>
</dbReference>
<organism>
    <name type="scientific">Salinibacter ruber (strain DSM 13855 / M31)</name>
    <dbReference type="NCBI Taxonomy" id="309807"/>
    <lineage>
        <taxon>Bacteria</taxon>
        <taxon>Pseudomonadati</taxon>
        <taxon>Rhodothermota</taxon>
        <taxon>Rhodothermia</taxon>
        <taxon>Rhodothermales</taxon>
        <taxon>Salinibacteraceae</taxon>
        <taxon>Salinibacter</taxon>
    </lineage>
</organism>
<protein>
    <recommendedName>
        <fullName evidence="1">Dephospho-CoA kinase</fullName>
        <ecNumber evidence="1">2.7.1.24</ecNumber>
    </recommendedName>
    <alternativeName>
        <fullName evidence="1">Dephosphocoenzyme A kinase</fullName>
    </alternativeName>
</protein>
<proteinExistence type="inferred from homology"/>
<sequence>MTTLGVTGGIGSGKTTVCGFLEEKGARVFYADLEAKRLMQENADVRAAIVEAFGAAAYHEDDTLNREYLAEQVFGEAGRVERLNGIVHPHVFDAFEAAKERAADEGVSLLVHEAALLFEAGGDEHVDITAAVVAPEADRIAWVTARDDVSSGQVRARMQHQLSQEELRERADHVLENDGTLNDLRRKSAELYWAVTGGQ</sequence>
<comment type="function">
    <text evidence="1">Catalyzes the phosphorylation of the 3'-hydroxyl group of dephosphocoenzyme A to form coenzyme A.</text>
</comment>
<comment type="catalytic activity">
    <reaction evidence="1">
        <text>3'-dephospho-CoA + ATP = ADP + CoA + H(+)</text>
        <dbReference type="Rhea" id="RHEA:18245"/>
        <dbReference type="ChEBI" id="CHEBI:15378"/>
        <dbReference type="ChEBI" id="CHEBI:30616"/>
        <dbReference type="ChEBI" id="CHEBI:57287"/>
        <dbReference type="ChEBI" id="CHEBI:57328"/>
        <dbReference type="ChEBI" id="CHEBI:456216"/>
        <dbReference type="EC" id="2.7.1.24"/>
    </reaction>
</comment>
<comment type="pathway">
    <text evidence="1">Cofactor biosynthesis; coenzyme A biosynthesis; CoA from (R)-pantothenate: step 5/5.</text>
</comment>
<comment type="subcellular location">
    <subcellularLocation>
        <location evidence="1">Cytoplasm</location>
    </subcellularLocation>
</comment>
<comment type="similarity">
    <text evidence="1">Belongs to the CoaE family.</text>
</comment>
<evidence type="ECO:0000255" key="1">
    <source>
        <dbReference type="HAMAP-Rule" id="MF_00376"/>
    </source>
</evidence>
<name>COAE_SALRD</name>
<keyword id="KW-0067">ATP-binding</keyword>
<keyword id="KW-0173">Coenzyme A biosynthesis</keyword>
<keyword id="KW-0963">Cytoplasm</keyword>
<keyword id="KW-0418">Kinase</keyword>
<keyword id="KW-0547">Nucleotide-binding</keyword>
<keyword id="KW-1185">Reference proteome</keyword>
<keyword id="KW-0808">Transferase</keyword>
<reference key="1">
    <citation type="journal article" date="2005" name="Proc. Natl. Acad. Sci. U.S.A.">
        <title>The genome of Salinibacter ruber: convergence and gene exchange among hyperhalophilic bacteria and archaea.</title>
        <authorList>
            <person name="Mongodin E.F."/>
            <person name="Nelson K.E."/>
            <person name="Daugherty S."/>
            <person name="DeBoy R.T."/>
            <person name="Wister J."/>
            <person name="Khouri H."/>
            <person name="Weidman J."/>
            <person name="Walsh D.A."/>
            <person name="Papke R.T."/>
            <person name="Sanchez Perez G."/>
            <person name="Sharma A.K."/>
            <person name="Nesbo C.L."/>
            <person name="MacLeod D."/>
            <person name="Bapteste E."/>
            <person name="Doolittle W.F."/>
            <person name="Charlebois R.L."/>
            <person name="Legault B."/>
            <person name="Rodriguez-Valera F."/>
        </authorList>
    </citation>
    <scope>NUCLEOTIDE SEQUENCE [LARGE SCALE GENOMIC DNA]</scope>
    <source>
        <strain>DSM 13855 / CECT 5946 / M31</strain>
    </source>
</reference>